<gene>
    <name evidence="1" type="primary">argH</name>
    <name type="ordered locus">Avi_4017</name>
</gene>
<sequence length="467" mass="51148">MAEDTKDTTSSNQMWGGRFASGPAAIMEEINASIGFDKKLYAQDIRGSIAHATMLAHQGIISGEDKDKIVTGLNTILSEIEAGQFTFSRKLEDIHMNIEARLADLIGPAAGRLHTARSRNDQVALDFRLWVKEELQKAESLLTDLIAAFLDRAEEHAETVMPGFTHLQTAQPVTFGHHCMAYVEMFGRDRQRVRHAIEHLDESPIGAAALAGTGYAIDRHMTAKALGFREPTRNSIDTVSDRDFALEFLSIAAISAVHLSRLAEEIVIWSTPQFGFIRLSDAFSTGSSIMPQKKNPDAAELVRAKTGRINGSLIALLTIMKGLPLAYSKDMQEDKEQVFDAAESLELALAAMTGMIRDMTVRADRMKAAAGSGFSTATDLADWLVREAGLPFRDAHHVTGRVVALAEEKGCDLADLPLEDLQAIHTAITADIYSVLTVEASVASRKSYGGTAPDEVRKQIKWWRGRN</sequence>
<evidence type="ECO:0000255" key="1">
    <source>
        <dbReference type="HAMAP-Rule" id="MF_00006"/>
    </source>
</evidence>
<reference key="1">
    <citation type="journal article" date="2009" name="J. Bacteriol.">
        <title>Genome sequences of three Agrobacterium biovars help elucidate the evolution of multichromosome genomes in bacteria.</title>
        <authorList>
            <person name="Slater S.C."/>
            <person name="Goldman B.S."/>
            <person name="Goodner B."/>
            <person name="Setubal J.C."/>
            <person name="Farrand S.K."/>
            <person name="Nester E.W."/>
            <person name="Burr T.J."/>
            <person name="Banta L."/>
            <person name="Dickerman A.W."/>
            <person name="Paulsen I."/>
            <person name="Otten L."/>
            <person name="Suen G."/>
            <person name="Welch R."/>
            <person name="Almeida N.F."/>
            <person name="Arnold F."/>
            <person name="Burton O.T."/>
            <person name="Du Z."/>
            <person name="Ewing A."/>
            <person name="Godsy E."/>
            <person name="Heisel S."/>
            <person name="Houmiel K.L."/>
            <person name="Jhaveri J."/>
            <person name="Lu J."/>
            <person name="Miller N.M."/>
            <person name="Norton S."/>
            <person name="Chen Q."/>
            <person name="Phoolcharoen W."/>
            <person name="Ohlin V."/>
            <person name="Ondrusek D."/>
            <person name="Pride N."/>
            <person name="Stricklin S.L."/>
            <person name="Sun J."/>
            <person name="Wheeler C."/>
            <person name="Wilson L."/>
            <person name="Zhu H."/>
            <person name="Wood D.W."/>
        </authorList>
    </citation>
    <scope>NUCLEOTIDE SEQUENCE [LARGE SCALE GENOMIC DNA]</scope>
    <source>
        <strain>ATCC BAA-846 / DSM 112012 / S4</strain>
    </source>
</reference>
<dbReference type="EC" id="4.3.2.1" evidence="1"/>
<dbReference type="EMBL" id="CP000633">
    <property type="protein sequence ID" value="ACM37900.1"/>
    <property type="molecule type" value="Genomic_DNA"/>
</dbReference>
<dbReference type="RefSeq" id="WP_015917312.1">
    <property type="nucleotide sequence ID" value="NC_011989.1"/>
</dbReference>
<dbReference type="SMR" id="B9JTJ2"/>
<dbReference type="STRING" id="311402.Avi_4017"/>
<dbReference type="KEGG" id="avi:Avi_4017"/>
<dbReference type="eggNOG" id="COG0165">
    <property type="taxonomic scope" value="Bacteria"/>
</dbReference>
<dbReference type="HOGENOM" id="CLU_027272_2_3_5"/>
<dbReference type="UniPathway" id="UPA00068">
    <property type="reaction ID" value="UER00114"/>
</dbReference>
<dbReference type="Proteomes" id="UP000001596">
    <property type="component" value="Chromosome 1"/>
</dbReference>
<dbReference type="GO" id="GO:0005829">
    <property type="term" value="C:cytosol"/>
    <property type="evidence" value="ECO:0007669"/>
    <property type="project" value="TreeGrafter"/>
</dbReference>
<dbReference type="GO" id="GO:0004056">
    <property type="term" value="F:argininosuccinate lyase activity"/>
    <property type="evidence" value="ECO:0007669"/>
    <property type="project" value="UniProtKB-UniRule"/>
</dbReference>
<dbReference type="GO" id="GO:0042450">
    <property type="term" value="P:arginine biosynthetic process via ornithine"/>
    <property type="evidence" value="ECO:0007669"/>
    <property type="project" value="InterPro"/>
</dbReference>
<dbReference type="GO" id="GO:0006526">
    <property type="term" value="P:L-arginine biosynthetic process"/>
    <property type="evidence" value="ECO:0007669"/>
    <property type="project" value="UniProtKB-UniRule"/>
</dbReference>
<dbReference type="CDD" id="cd01359">
    <property type="entry name" value="Argininosuccinate_lyase"/>
    <property type="match status" value="1"/>
</dbReference>
<dbReference type="FunFam" id="1.10.275.10:FF:000002">
    <property type="entry name" value="Argininosuccinate lyase"/>
    <property type="match status" value="1"/>
</dbReference>
<dbReference type="FunFam" id="1.10.40.30:FF:000001">
    <property type="entry name" value="Argininosuccinate lyase"/>
    <property type="match status" value="1"/>
</dbReference>
<dbReference type="FunFam" id="1.20.200.10:FF:000015">
    <property type="entry name" value="argininosuccinate lyase isoform X2"/>
    <property type="match status" value="1"/>
</dbReference>
<dbReference type="Gene3D" id="1.10.40.30">
    <property type="entry name" value="Fumarase/aspartase (C-terminal domain)"/>
    <property type="match status" value="1"/>
</dbReference>
<dbReference type="Gene3D" id="1.20.200.10">
    <property type="entry name" value="Fumarase/aspartase (Central domain)"/>
    <property type="match status" value="1"/>
</dbReference>
<dbReference type="Gene3D" id="1.10.275.10">
    <property type="entry name" value="Fumarase/aspartase (N-terminal domain)"/>
    <property type="match status" value="1"/>
</dbReference>
<dbReference type="HAMAP" id="MF_00006">
    <property type="entry name" value="Arg_succ_lyase"/>
    <property type="match status" value="1"/>
</dbReference>
<dbReference type="InterPro" id="IPR029419">
    <property type="entry name" value="Arg_succ_lyase_C"/>
</dbReference>
<dbReference type="InterPro" id="IPR009049">
    <property type="entry name" value="Argininosuccinate_lyase"/>
</dbReference>
<dbReference type="InterPro" id="IPR024083">
    <property type="entry name" value="Fumarase/histidase_N"/>
</dbReference>
<dbReference type="InterPro" id="IPR020557">
    <property type="entry name" value="Fumarate_lyase_CS"/>
</dbReference>
<dbReference type="InterPro" id="IPR000362">
    <property type="entry name" value="Fumarate_lyase_fam"/>
</dbReference>
<dbReference type="InterPro" id="IPR022761">
    <property type="entry name" value="Fumarate_lyase_N"/>
</dbReference>
<dbReference type="InterPro" id="IPR008948">
    <property type="entry name" value="L-Aspartase-like"/>
</dbReference>
<dbReference type="NCBIfam" id="TIGR00838">
    <property type="entry name" value="argH"/>
    <property type="match status" value="1"/>
</dbReference>
<dbReference type="PANTHER" id="PTHR43814">
    <property type="entry name" value="ARGININOSUCCINATE LYASE"/>
    <property type="match status" value="1"/>
</dbReference>
<dbReference type="PANTHER" id="PTHR43814:SF1">
    <property type="entry name" value="ARGININOSUCCINATE LYASE"/>
    <property type="match status" value="1"/>
</dbReference>
<dbReference type="Pfam" id="PF14698">
    <property type="entry name" value="ASL_C2"/>
    <property type="match status" value="1"/>
</dbReference>
<dbReference type="Pfam" id="PF00206">
    <property type="entry name" value="Lyase_1"/>
    <property type="match status" value="1"/>
</dbReference>
<dbReference type="PRINTS" id="PR00145">
    <property type="entry name" value="ARGSUCLYASE"/>
</dbReference>
<dbReference type="PRINTS" id="PR00149">
    <property type="entry name" value="FUMRATELYASE"/>
</dbReference>
<dbReference type="SUPFAM" id="SSF48557">
    <property type="entry name" value="L-aspartase-like"/>
    <property type="match status" value="1"/>
</dbReference>
<dbReference type="PROSITE" id="PS00163">
    <property type="entry name" value="FUMARATE_LYASES"/>
    <property type="match status" value="1"/>
</dbReference>
<accession>B9JTJ2</accession>
<protein>
    <recommendedName>
        <fullName evidence="1">Argininosuccinate lyase</fullName>
        <shortName evidence="1">ASAL</shortName>
        <ecNumber evidence="1">4.3.2.1</ecNumber>
    </recommendedName>
    <alternativeName>
        <fullName evidence="1">Arginosuccinase</fullName>
    </alternativeName>
</protein>
<name>ARLY_ALLAM</name>
<comment type="catalytic activity">
    <reaction evidence="1">
        <text>2-(N(omega)-L-arginino)succinate = fumarate + L-arginine</text>
        <dbReference type="Rhea" id="RHEA:24020"/>
        <dbReference type="ChEBI" id="CHEBI:29806"/>
        <dbReference type="ChEBI" id="CHEBI:32682"/>
        <dbReference type="ChEBI" id="CHEBI:57472"/>
        <dbReference type="EC" id="4.3.2.1"/>
    </reaction>
</comment>
<comment type="pathway">
    <text evidence="1">Amino-acid biosynthesis; L-arginine biosynthesis; L-arginine from L-ornithine and carbamoyl phosphate: step 3/3.</text>
</comment>
<comment type="subcellular location">
    <subcellularLocation>
        <location evidence="1">Cytoplasm</location>
    </subcellularLocation>
</comment>
<comment type="similarity">
    <text evidence="1">Belongs to the lyase 1 family. Argininosuccinate lyase subfamily.</text>
</comment>
<feature type="chain" id="PRO_1000116302" description="Argininosuccinate lyase">
    <location>
        <begin position="1"/>
        <end position="467"/>
    </location>
</feature>
<keyword id="KW-0028">Amino-acid biosynthesis</keyword>
<keyword id="KW-0055">Arginine biosynthesis</keyword>
<keyword id="KW-0963">Cytoplasm</keyword>
<keyword id="KW-0456">Lyase</keyword>
<keyword id="KW-1185">Reference proteome</keyword>
<organism>
    <name type="scientific">Allorhizobium ampelinum (strain ATCC BAA-846 / DSM 112012 / S4)</name>
    <name type="common">Agrobacterium vitis (strain S4)</name>
    <dbReference type="NCBI Taxonomy" id="311402"/>
    <lineage>
        <taxon>Bacteria</taxon>
        <taxon>Pseudomonadati</taxon>
        <taxon>Pseudomonadota</taxon>
        <taxon>Alphaproteobacteria</taxon>
        <taxon>Hyphomicrobiales</taxon>
        <taxon>Rhizobiaceae</taxon>
        <taxon>Rhizobium/Agrobacterium group</taxon>
        <taxon>Allorhizobium</taxon>
        <taxon>Allorhizobium ampelinum</taxon>
    </lineage>
</organism>
<proteinExistence type="inferred from homology"/>